<keyword id="KW-0028">Amino-acid biosynthesis</keyword>
<keyword id="KW-0963">Cytoplasm</keyword>
<keyword id="KW-0220">Diaminopimelate biosynthesis</keyword>
<keyword id="KW-0456">Lyase</keyword>
<keyword id="KW-0457">Lysine biosynthesis</keyword>
<keyword id="KW-1185">Reference proteome</keyword>
<keyword id="KW-0704">Schiff base</keyword>
<protein>
    <recommendedName>
        <fullName evidence="1">4-hydroxy-tetrahydrodipicolinate synthase</fullName>
        <shortName evidence="1">HTPA synthase</shortName>
        <ecNumber evidence="1">4.3.3.7</ecNumber>
    </recommendedName>
</protein>
<organism>
    <name type="scientific">Prochlorococcus marinus (strain MIT 9301)</name>
    <dbReference type="NCBI Taxonomy" id="167546"/>
    <lineage>
        <taxon>Bacteria</taxon>
        <taxon>Bacillati</taxon>
        <taxon>Cyanobacteriota</taxon>
        <taxon>Cyanophyceae</taxon>
        <taxon>Synechococcales</taxon>
        <taxon>Prochlorococcaceae</taxon>
        <taxon>Prochlorococcus</taxon>
    </lineage>
</organism>
<feature type="chain" id="PRO_1000050240" description="4-hydroxy-tetrahydrodipicolinate synthase">
    <location>
        <begin position="1"/>
        <end position="300"/>
    </location>
</feature>
<feature type="active site" description="Proton donor/acceptor" evidence="1">
    <location>
        <position position="145"/>
    </location>
</feature>
<feature type="active site" description="Schiff-base intermediate with substrate" evidence="1">
    <location>
        <position position="173"/>
    </location>
</feature>
<feature type="binding site" evidence="1">
    <location>
        <position position="56"/>
    </location>
    <ligand>
        <name>pyruvate</name>
        <dbReference type="ChEBI" id="CHEBI:15361"/>
    </ligand>
</feature>
<feature type="binding site" evidence="1">
    <location>
        <position position="215"/>
    </location>
    <ligand>
        <name>pyruvate</name>
        <dbReference type="ChEBI" id="CHEBI:15361"/>
    </ligand>
</feature>
<feature type="site" description="Part of a proton relay during catalysis" evidence="1">
    <location>
        <position position="55"/>
    </location>
</feature>
<feature type="site" description="Part of a proton relay during catalysis" evidence="1">
    <location>
        <position position="118"/>
    </location>
</feature>
<accession>A3PFE1</accession>
<comment type="function">
    <text evidence="1">Catalyzes the condensation of (S)-aspartate-beta-semialdehyde [(S)-ASA] and pyruvate to 4-hydroxy-tetrahydrodipicolinate (HTPA).</text>
</comment>
<comment type="catalytic activity">
    <reaction evidence="1">
        <text>L-aspartate 4-semialdehyde + pyruvate = (2S,4S)-4-hydroxy-2,3,4,5-tetrahydrodipicolinate + H2O + H(+)</text>
        <dbReference type="Rhea" id="RHEA:34171"/>
        <dbReference type="ChEBI" id="CHEBI:15361"/>
        <dbReference type="ChEBI" id="CHEBI:15377"/>
        <dbReference type="ChEBI" id="CHEBI:15378"/>
        <dbReference type="ChEBI" id="CHEBI:67139"/>
        <dbReference type="ChEBI" id="CHEBI:537519"/>
        <dbReference type="EC" id="4.3.3.7"/>
    </reaction>
</comment>
<comment type="pathway">
    <text evidence="1">Amino-acid biosynthesis; L-lysine biosynthesis via DAP pathway; (S)-tetrahydrodipicolinate from L-aspartate: step 3/4.</text>
</comment>
<comment type="subunit">
    <text evidence="1">Homotetramer; dimer of dimers.</text>
</comment>
<comment type="subcellular location">
    <subcellularLocation>
        <location evidence="1">Cytoplasm</location>
    </subcellularLocation>
</comment>
<comment type="similarity">
    <text evidence="1">Belongs to the DapA family.</text>
</comment>
<comment type="caution">
    <text evidence="2">Was originally thought to be a dihydrodipicolinate synthase (DHDPS), catalyzing the condensation of (S)-aspartate-beta-semialdehyde [(S)-ASA] and pyruvate to dihydrodipicolinate (DHDP). However, it was shown in E.coli that the product of the enzymatic reaction is not dihydrodipicolinate but in fact (4S)-4-hydroxy-2,3,4,5-tetrahydro-(2S)-dipicolinic acid (HTPA), and that the consecutive dehydration reaction leading to DHDP is not spontaneous but catalyzed by DapB.</text>
</comment>
<sequence length="300" mass="32259">MITDKTECNNPLFGRILTAMVTPFTENGDVDYELAIKLSNYLFENGSDGIVLCGTTGESPTLSWAEQHELFIAVKGSLDASCKVIVGTGSNCTSEAVEATKKAYDSGADGALVVVPYYNKPPQEGLYKHFSSIAKSAKDLPLMLYNIPGRTGCNLLPDTVKKLMDFSNILSIKAASGRIEEVTELRAICGSELSVYSGDDSLLLPMLSVGAVGVVSVASHLVGLQLKEMIYSFQSGKVSNALAIHEKLQPLFKALFMTTNPIPIKAALELSGWDVGNPRSPLSPLTNDMKKQLSFILKSL</sequence>
<dbReference type="EC" id="4.3.3.7" evidence="1"/>
<dbReference type="EMBL" id="CP000576">
    <property type="protein sequence ID" value="ABO18466.1"/>
    <property type="molecule type" value="Genomic_DNA"/>
</dbReference>
<dbReference type="RefSeq" id="WP_011863750.1">
    <property type="nucleotide sequence ID" value="NC_009091.1"/>
</dbReference>
<dbReference type="SMR" id="A3PFE1"/>
<dbReference type="STRING" id="167546.P9301_18431"/>
<dbReference type="KEGG" id="pmg:P9301_18431"/>
<dbReference type="eggNOG" id="COG0329">
    <property type="taxonomic scope" value="Bacteria"/>
</dbReference>
<dbReference type="HOGENOM" id="CLU_049343_7_1_3"/>
<dbReference type="OrthoDB" id="9782828at2"/>
<dbReference type="UniPathway" id="UPA00034">
    <property type="reaction ID" value="UER00017"/>
</dbReference>
<dbReference type="Proteomes" id="UP000001430">
    <property type="component" value="Chromosome"/>
</dbReference>
<dbReference type="GO" id="GO:0005829">
    <property type="term" value="C:cytosol"/>
    <property type="evidence" value="ECO:0007669"/>
    <property type="project" value="TreeGrafter"/>
</dbReference>
<dbReference type="GO" id="GO:0008840">
    <property type="term" value="F:4-hydroxy-tetrahydrodipicolinate synthase activity"/>
    <property type="evidence" value="ECO:0007669"/>
    <property type="project" value="UniProtKB-UniRule"/>
</dbReference>
<dbReference type="GO" id="GO:0019877">
    <property type="term" value="P:diaminopimelate biosynthetic process"/>
    <property type="evidence" value="ECO:0007669"/>
    <property type="project" value="UniProtKB-UniRule"/>
</dbReference>
<dbReference type="GO" id="GO:0009089">
    <property type="term" value="P:lysine biosynthetic process via diaminopimelate"/>
    <property type="evidence" value="ECO:0007669"/>
    <property type="project" value="UniProtKB-UniRule"/>
</dbReference>
<dbReference type="CDD" id="cd00950">
    <property type="entry name" value="DHDPS"/>
    <property type="match status" value="1"/>
</dbReference>
<dbReference type="Gene3D" id="3.20.20.70">
    <property type="entry name" value="Aldolase class I"/>
    <property type="match status" value="1"/>
</dbReference>
<dbReference type="HAMAP" id="MF_00418">
    <property type="entry name" value="DapA"/>
    <property type="match status" value="1"/>
</dbReference>
<dbReference type="InterPro" id="IPR013785">
    <property type="entry name" value="Aldolase_TIM"/>
</dbReference>
<dbReference type="InterPro" id="IPR005263">
    <property type="entry name" value="DapA"/>
</dbReference>
<dbReference type="InterPro" id="IPR002220">
    <property type="entry name" value="DapA-like"/>
</dbReference>
<dbReference type="InterPro" id="IPR020625">
    <property type="entry name" value="Schiff_base-form_aldolases_AS"/>
</dbReference>
<dbReference type="InterPro" id="IPR020624">
    <property type="entry name" value="Schiff_base-form_aldolases_CS"/>
</dbReference>
<dbReference type="NCBIfam" id="TIGR00674">
    <property type="entry name" value="dapA"/>
    <property type="match status" value="1"/>
</dbReference>
<dbReference type="PANTHER" id="PTHR12128:SF66">
    <property type="entry name" value="4-HYDROXY-2-OXOGLUTARATE ALDOLASE, MITOCHONDRIAL"/>
    <property type="match status" value="1"/>
</dbReference>
<dbReference type="PANTHER" id="PTHR12128">
    <property type="entry name" value="DIHYDRODIPICOLINATE SYNTHASE"/>
    <property type="match status" value="1"/>
</dbReference>
<dbReference type="Pfam" id="PF00701">
    <property type="entry name" value="DHDPS"/>
    <property type="match status" value="1"/>
</dbReference>
<dbReference type="PIRSF" id="PIRSF001365">
    <property type="entry name" value="DHDPS"/>
    <property type="match status" value="1"/>
</dbReference>
<dbReference type="PRINTS" id="PR00146">
    <property type="entry name" value="DHPICSNTHASE"/>
</dbReference>
<dbReference type="SMART" id="SM01130">
    <property type="entry name" value="DHDPS"/>
    <property type="match status" value="1"/>
</dbReference>
<dbReference type="SUPFAM" id="SSF51569">
    <property type="entry name" value="Aldolase"/>
    <property type="match status" value="1"/>
</dbReference>
<dbReference type="PROSITE" id="PS00665">
    <property type="entry name" value="DHDPS_1"/>
    <property type="match status" value="1"/>
</dbReference>
<dbReference type="PROSITE" id="PS00666">
    <property type="entry name" value="DHDPS_2"/>
    <property type="match status" value="1"/>
</dbReference>
<proteinExistence type="inferred from homology"/>
<gene>
    <name evidence="1" type="primary">dapA</name>
    <name type="ordered locus">P9301_18431</name>
</gene>
<reference key="1">
    <citation type="journal article" date="2007" name="PLoS Genet.">
        <title>Patterns and implications of gene gain and loss in the evolution of Prochlorococcus.</title>
        <authorList>
            <person name="Kettler G.C."/>
            <person name="Martiny A.C."/>
            <person name="Huang K."/>
            <person name="Zucker J."/>
            <person name="Coleman M.L."/>
            <person name="Rodrigue S."/>
            <person name="Chen F."/>
            <person name="Lapidus A."/>
            <person name="Ferriera S."/>
            <person name="Johnson J."/>
            <person name="Steglich C."/>
            <person name="Church G.M."/>
            <person name="Richardson P."/>
            <person name="Chisholm S.W."/>
        </authorList>
    </citation>
    <scope>NUCLEOTIDE SEQUENCE [LARGE SCALE GENOMIC DNA]</scope>
    <source>
        <strain>MIT 9301</strain>
    </source>
</reference>
<name>DAPA_PROM0</name>
<evidence type="ECO:0000255" key="1">
    <source>
        <dbReference type="HAMAP-Rule" id="MF_00418"/>
    </source>
</evidence>
<evidence type="ECO:0000305" key="2"/>